<proteinExistence type="inferred from homology"/>
<name>LEUD_SHEB8</name>
<evidence type="ECO:0000255" key="1">
    <source>
        <dbReference type="HAMAP-Rule" id="MF_01031"/>
    </source>
</evidence>
<reference key="1">
    <citation type="submission" date="2007-07" db="EMBL/GenBank/DDBJ databases">
        <title>Complete sequence of chromosome of Shewanella baltica OS185.</title>
        <authorList>
            <consortium name="US DOE Joint Genome Institute"/>
            <person name="Copeland A."/>
            <person name="Lucas S."/>
            <person name="Lapidus A."/>
            <person name="Barry K."/>
            <person name="Glavina del Rio T."/>
            <person name="Dalin E."/>
            <person name="Tice H."/>
            <person name="Pitluck S."/>
            <person name="Sims D."/>
            <person name="Brettin T."/>
            <person name="Bruce D."/>
            <person name="Detter J.C."/>
            <person name="Han C."/>
            <person name="Schmutz J."/>
            <person name="Larimer F."/>
            <person name="Land M."/>
            <person name="Hauser L."/>
            <person name="Kyrpides N."/>
            <person name="Mikhailova N."/>
            <person name="Brettar I."/>
            <person name="Rodrigues J."/>
            <person name="Konstantinidis K."/>
            <person name="Tiedje J."/>
            <person name="Richardson P."/>
        </authorList>
    </citation>
    <scope>NUCLEOTIDE SEQUENCE [LARGE SCALE GENOMIC DNA]</scope>
    <source>
        <strain>OS185</strain>
    </source>
</reference>
<accession>A6WIB8</accession>
<dbReference type="EC" id="4.2.1.33" evidence="1"/>
<dbReference type="EMBL" id="CP000753">
    <property type="protein sequence ID" value="ABS06557.1"/>
    <property type="molecule type" value="Genomic_DNA"/>
</dbReference>
<dbReference type="RefSeq" id="WP_006086690.1">
    <property type="nucleotide sequence ID" value="NC_009665.1"/>
</dbReference>
<dbReference type="SMR" id="A6WIB8"/>
<dbReference type="GeneID" id="11770739"/>
<dbReference type="KEGG" id="sbm:Shew185_0388"/>
<dbReference type="HOGENOM" id="CLU_081378_0_3_6"/>
<dbReference type="UniPathway" id="UPA00048">
    <property type="reaction ID" value="UER00071"/>
</dbReference>
<dbReference type="GO" id="GO:0009316">
    <property type="term" value="C:3-isopropylmalate dehydratase complex"/>
    <property type="evidence" value="ECO:0007669"/>
    <property type="project" value="InterPro"/>
</dbReference>
<dbReference type="GO" id="GO:0003861">
    <property type="term" value="F:3-isopropylmalate dehydratase activity"/>
    <property type="evidence" value="ECO:0007669"/>
    <property type="project" value="UniProtKB-UniRule"/>
</dbReference>
<dbReference type="GO" id="GO:0009098">
    <property type="term" value="P:L-leucine biosynthetic process"/>
    <property type="evidence" value="ECO:0007669"/>
    <property type="project" value="UniProtKB-UniRule"/>
</dbReference>
<dbReference type="CDD" id="cd01577">
    <property type="entry name" value="IPMI_Swivel"/>
    <property type="match status" value="1"/>
</dbReference>
<dbReference type="FunFam" id="3.20.19.10:FF:000003">
    <property type="entry name" value="3-isopropylmalate dehydratase small subunit"/>
    <property type="match status" value="1"/>
</dbReference>
<dbReference type="Gene3D" id="3.20.19.10">
    <property type="entry name" value="Aconitase, domain 4"/>
    <property type="match status" value="1"/>
</dbReference>
<dbReference type="HAMAP" id="MF_01031">
    <property type="entry name" value="LeuD_type1"/>
    <property type="match status" value="1"/>
</dbReference>
<dbReference type="InterPro" id="IPR004431">
    <property type="entry name" value="3-IsopropMal_deHydase_ssu"/>
</dbReference>
<dbReference type="InterPro" id="IPR015928">
    <property type="entry name" value="Aconitase/3IPM_dehydase_swvl"/>
</dbReference>
<dbReference type="InterPro" id="IPR000573">
    <property type="entry name" value="AconitaseA/IPMdHydase_ssu_swvl"/>
</dbReference>
<dbReference type="InterPro" id="IPR033940">
    <property type="entry name" value="IPMI_Swivel"/>
</dbReference>
<dbReference type="InterPro" id="IPR050075">
    <property type="entry name" value="LeuD"/>
</dbReference>
<dbReference type="NCBIfam" id="TIGR00171">
    <property type="entry name" value="leuD"/>
    <property type="match status" value="1"/>
</dbReference>
<dbReference type="NCBIfam" id="NF002458">
    <property type="entry name" value="PRK01641.1"/>
    <property type="match status" value="1"/>
</dbReference>
<dbReference type="PANTHER" id="PTHR43345:SF5">
    <property type="entry name" value="3-ISOPROPYLMALATE DEHYDRATASE SMALL SUBUNIT"/>
    <property type="match status" value="1"/>
</dbReference>
<dbReference type="PANTHER" id="PTHR43345">
    <property type="entry name" value="3-ISOPROPYLMALATE DEHYDRATASE SMALL SUBUNIT 2-RELATED-RELATED"/>
    <property type="match status" value="1"/>
</dbReference>
<dbReference type="Pfam" id="PF00694">
    <property type="entry name" value="Aconitase_C"/>
    <property type="match status" value="1"/>
</dbReference>
<dbReference type="SUPFAM" id="SSF52016">
    <property type="entry name" value="LeuD/IlvD-like"/>
    <property type="match status" value="1"/>
</dbReference>
<gene>
    <name evidence="1" type="primary">leuD</name>
    <name type="ordered locus">Shew185_0388</name>
</gene>
<comment type="function">
    <text evidence="1">Catalyzes the isomerization between 2-isopropylmalate and 3-isopropylmalate, via the formation of 2-isopropylmaleate.</text>
</comment>
<comment type="catalytic activity">
    <reaction evidence="1">
        <text>(2R,3S)-3-isopropylmalate = (2S)-2-isopropylmalate</text>
        <dbReference type="Rhea" id="RHEA:32287"/>
        <dbReference type="ChEBI" id="CHEBI:1178"/>
        <dbReference type="ChEBI" id="CHEBI:35121"/>
        <dbReference type="EC" id="4.2.1.33"/>
    </reaction>
</comment>
<comment type="pathway">
    <text evidence="1">Amino-acid biosynthesis; L-leucine biosynthesis; L-leucine from 3-methyl-2-oxobutanoate: step 2/4.</text>
</comment>
<comment type="subunit">
    <text evidence="1">Heterodimer of LeuC and LeuD.</text>
</comment>
<comment type="similarity">
    <text evidence="1">Belongs to the LeuD family. LeuD type 1 subfamily.</text>
</comment>
<sequence>MQPFTTHTGLAVMIDSTNIDTDQIIPKQFLSKVTRDGFGVHLFHDWRYLDDAGDQPNPEFSLNQSRYKGASILLAQENFGCGSSREHAPWALVDFGLRAIIAPSFADIFYGNSINNGLLPVALTHAQVRQLMDEVAAEAGAQITVDLTSCKVISPSGAEFSFTLAESARHKLLNGLDAIGLTLSHAAQISQYETQIQGWRR</sequence>
<protein>
    <recommendedName>
        <fullName evidence="1">3-isopropylmalate dehydratase small subunit</fullName>
        <ecNumber evidence="1">4.2.1.33</ecNumber>
    </recommendedName>
    <alternativeName>
        <fullName evidence="1">Alpha-IPM isomerase</fullName>
        <shortName evidence="1">IPMI</shortName>
    </alternativeName>
    <alternativeName>
        <fullName evidence="1">Isopropylmalate isomerase</fullName>
    </alternativeName>
</protein>
<organism>
    <name type="scientific">Shewanella baltica (strain OS185)</name>
    <dbReference type="NCBI Taxonomy" id="402882"/>
    <lineage>
        <taxon>Bacteria</taxon>
        <taxon>Pseudomonadati</taxon>
        <taxon>Pseudomonadota</taxon>
        <taxon>Gammaproteobacteria</taxon>
        <taxon>Alteromonadales</taxon>
        <taxon>Shewanellaceae</taxon>
        <taxon>Shewanella</taxon>
    </lineage>
</organism>
<keyword id="KW-0028">Amino-acid biosynthesis</keyword>
<keyword id="KW-0100">Branched-chain amino acid biosynthesis</keyword>
<keyword id="KW-0432">Leucine biosynthesis</keyword>
<keyword id="KW-0456">Lyase</keyword>
<feature type="chain" id="PRO_1000063832" description="3-isopropylmalate dehydratase small subunit">
    <location>
        <begin position="1"/>
        <end position="201"/>
    </location>
</feature>